<name>M3K13_MOUSE</name>
<dbReference type="EC" id="2.7.11.25"/>
<dbReference type="EMBL" id="DQ480427">
    <property type="protein sequence ID" value="ABF19581.1"/>
    <property type="molecule type" value="mRNA"/>
</dbReference>
<dbReference type="EMBL" id="AK051378">
    <property type="protein sequence ID" value="BAC34618.1"/>
    <property type="molecule type" value="mRNA"/>
</dbReference>
<dbReference type="CCDS" id="CCDS37294.1"/>
<dbReference type="RefSeq" id="NP_766409.2">
    <property type="nucleotide sequence ID" value="NM_172821.3"/>
</dbReference>
<dbReference type="RefSeq" id="XP_006522645.1">
    <property type="nucleotide sequence ID" value="XM_006522582.4"/>
</dbReference>
<dbReference type="RefSeq" id="XP_006522646.1">
    <property type="nucleotide sequence ID" value="XM_006522583.5"/>
</dbReference>
<dbReference type="RefSeq" id="XP_006522647.1">
    <property type="nucleotide sequence ID" value="XM_006522584.4"/>
</dbReference>
<dbReference type="RefSeq" id="XP_011244317.1">
    <property type="nucleotide sequence ID" value="XM_011246015.3"/>
</dbReference>
<dbReference type="RefSeq" id="XP_011244318.1">
    <property type="nucleotide sequence ID" value="XM_011246016.2"/>
</dbReference>
<dbReference type="SMR" id="Q1HKZ5"/>
<dbReference type="BioGRID" id="214899">
    <property type="interactions" value="4"/>
</dbReference>
<dbReference type="FunCoup" id="Q1HKZ5">
    <property type="interactions" value="1200"/>
</dbReference>
<dbReference type="STRING" id="10090.ENSMUSP00000156075"/>
<dbReference type="iPTMnet" id="Q1HKZ5"/>
<dbReference type="PhosphoSitePlus" id="Q1HKZ5"/>
<dbReference type="PaxDb" id="10090-ENSMUSP00000047388"/>
<dbReference type="PeptideAtlas" id="Q1HKZ5"/>
<dbReference type="ProteomicsDB" id="295747"/>
<dbReference type="Antibodypedia" id="33834">
    <property type="antibodies" value="299 antibodies from 28 providers"/>
</dbReference>
<dbReference type="DNASU" id="71751"/>
<dbReference type="Ensembl" id="ENSMUST00000042065.7">
    <property type="protein sequence ID" value="ENSMUSP00000047388.7"/>
    <property type="gene ID" value="ENSMUSG00000033618.8"/>
</dbReference>
<dbReference type="Ensembl" id="ENSMUST00000231988.2">
    <property type="protein sequence ID" value="ENSMUSP00000156075.2"/>
    <property type="gene ID" value="ENSMUSG00000033618.8"/>
</dbReference>
<dbReference type="Ensembl" id="ENSMUST00000232240.2">
    <property type="protein sequence ID" value="ENSMUSP00000156202.2"/>
    <property type="gene ID" value="ENSMUSG00000033618.8"/>
</dbReference>
<dbReference type="GeneID" id="71751"/>
<dbReference type="KEGG" id="mmu:71751"/>
<dbReference type="UCSC" id="uc007yrr.2">
    <property type="organism name" value="mouse"/>
</dbReference>
<dbReference type="AGR" id="MGI:2444243"/>
<dbReference type="CTD" id="9175"/>
<dbReference type="MGI" id="MGI:2444243">
    <property type="gene designation" value="Map3k13"/>
</dbReference>
<dbReference type="VEuPathDB" id="HostDB:ENSMUSG00000033618"/>
<dbReference type="eggNOG" id="KOG4721">
    <property type="taxonomic scope" value="Eukaryota"/>
</dbReference>
<dbReference type="GeneTree" id="ENSGT00940000158216"/>
<dbReference type="HOGENOM" id="CLU_009311_2_1_1"/>
<dbReference type="InParanoid" id="Q1HKZ5"/>
<dbReference type="OMA" id="CAEDRGY"/>
<dbReference type="OrthoDB" id="339325at2759"/>
<dbReference type="PhylomeDB" id="Q1HKZ5"/>
<dbReference type="TreeFam" id="TF105119"/>
<dbReference type="BioGRID-ORCS" id="71751">
    <property type="hits" value="2 hits in 79 CRISPR screens"/>
</dbReference>
<dbReference type="ChiTaRS" id="Map3k13">
    <property type="organism name" value="mouse"/>
</dbReference>
<dbReference type="PRO" id="PR:Q1HKZ5"/>
<dbReference type="Proteomes" id="UP000000589">
    <property type="component" value="Chromosome 16"/>
</dbReference>
<dbReference type="RNAct" id="Q1HKZ5">
    <property type="molecule type" value="protein"/>
</dbReference>
<dbReference type="Bgee" id="ENSMUSG00000033618">
    <property type="expression patterns" value="Expressed in ureter and 67 other cell types or tissues"/>
</dbReference>
<dbReference type="GO" id="GO:0005737">
    <property type="term" value="C:cytoplasm"/>
    <property type="evidence" value="ECO:0007669"/>
    <property type="project" value="UniProtKB-SubCell"/>
</dbReference>
<dbReference type="GO" id="GO:0016020">
    <property type="term" value="C:membrane"/>
    <property type="evidence" value="ECO:0007669"/>
    <property type="project" value="UniProtKB-SubCell"/>
</dbReference>
<dbReference type="GO" id="GO:0005524">
    <property type="term" value="F:ATP binding"/>
    <property type="evidence" value="ECO:0007669"/>
    <property type="project" value="UniProtKB-KW"/>
</dbReference>
<dbReference type="GO" id="GO:0019899">
    <property type="term" value="F:enzyme binding"/>
    <property type="evidence" value="ECO:0007669"/>
    <property type="project" value="Ensembl"/>
</dbReference>
<dbReference type="GO" id="GO:0106137">
    <property type="term" value="F:IkappaB kinase complex binding"/>
    <property type="evidence" value="ECO:0007669"/>
    <property type="project" value="Ensembl"/>
</dbReference>
<dbReference type="GO" id="GO:0004709">
    <property type="term" value="F:MAP kinase kinase kinase activity"/>
    <property type="evidence" value="ECO:0007669"/>
    <property type="project" value="UniProtKB-EC"/>
</dbReference>
<dbReference type="GO" id="GO:0046872">
    <property type="term" value="F:metal ion binding"/>
    <property type="evidence" value="ECO:0007669"/>
    <property type="project" value="UniProtKB-KW"/>
</dbReference>
<dbReference type="GO" id="GO:0042803">
    <property type="term" value="F:protein homodimerization activity"/>
    <property type="evidence" value="ECO:0007669"/>
    <property type="project" value="Ensembl"/>
</dbReference>
<dbReference type="GO" id="GO:0106310">
    <property type="term" value="F:protein serine kinase activity"/>
    <property type="evidence" value="ECO:0007669"/>
    <property type="project" value="RHEA"/>
</dbReference>
<dbReference type="GO" id="GO:0043539">
    <property type="term" value="F:protein serine/threonine kinase activator activity"/>
    <property type="evidence" value="ECO:0000315"/>
    <property type="project" value="ARUK-UCL"/>
</dbReference>
<dbReference type="GO" id="GO:0004674">
    <property type="term" value="F:protein serine/threonine kinase activity"/>
    <property type="evidence" value="ECO:0000315"/>
    <property type="project" value="ARUK-UCL"/>
</dbReference>
<dbReference type="GO" id="GO:0007254">
    <property type="term" value="P:JNK cascade"/>
    <property type="evidence" value="ECO:0000315"/>
    <property type="project" value="ARUK-UCL"/>
</dbReference>
<dbReference type="GO" id="GO:0045773">
    <property type="term" value="P:positive regulation of axon extension"/>
    <property type="evidence" value="ECO:0000315"/>
    <property type="project" value="ARUK-UCL"/>
</dbReference>
<dbReference type="GO" id="GO:1905492">
    <property type="term" value="P:positive regulation of branching morphogenesis of a nerve"/>
    <property type="evidence" value="ECO:0000315"/>
    <property type="project" value="ARUK-UCL"/>
</dbReference>
<dbReference type="GO" id="GO:0014042">
    <property type="term" value="P:positive regulation of neuron maturation"/>
    <property type="evidence" value="ECO:0000315"/>
    <property type="project" value="ARUK-UCL"/>
</dbReference>
<dbReference type="GO" id="GO:0150012">
    <property type="term" value="P:positive regulation of neuron projection arborization"/>
    <property type="evidence" value="ECO:0000315"/>
    <property type="project" value="ARUK-UCL"/>
</dbReference>
<dbReference type="GO" id="GO:0060255">
    <property type="term" value="P:regulation of macromolecule metabolic process"/>
    <property type="evidence" value="ECO:0007669"/>
    <property type="project" value="UniProtKB-ARBA"/>
</dbReference>
<dbReference type="GO" id="GO:0080090">
    <property type="term" value="P:regulation of primary metabolic process"/>
    <property type="evidence" value="ECO:0007669"/>
    <property type="project" value="UniProtKB-ARBA"/>
</dbReference>
<dbReference type="GO" id="GO:0051403">
    <property type="term" value="P:stress-activated MAPK cascade"/>
    <property type="evidence" value="ECO:0007669"/>
    <property type="project" value="Ensembl"/>
</dbReference>
<dbReference type="CDD" id="cd14059">
    <property type="entry name" value="STKc_MAP3K12_13"/>
    <property type="match status" value="1"/>
</dbReference>
<dbReference type="FunFam" id="1.10.510.10:FF:000087">
    <property type="entry name" value="Mitogen-activated protein kinase kinase kinase 12"/>
    <property type="match status" value="1"/>
</dbReference>
<dbReference type="FunFam" id="3.30.200.20:FF:000095">
    <property type="entry name" value="Mitogen-activated protein kinase kinase kinase 12"/>
    <property type="match status" value="1"/>
</dbReference>
<dbReference type="Gene3D" id="3.30.200.20">
    <property type="entry name" value="Phosphorylase Kinase, domain 1"/>
    <property type="match status" value="1"/>
</dbReference>
<dbReference type="Gene3D" id="1.10.510.10">
    <property type="entry name" value="Transferase(Phosphotransferase) domain 1"/>
    <property type="match status" value="1"/>
</dbReference>
<dbReference type="InterPro" id="IPR011009">
    <property type="entry name" value="Kinase-like_dom_sf"/>
</dbReference>
<dbReference type="InterPro" id="IPR017419">
    <property type="entry name" value="MAP3K12_MAP3K13"/>
</dbReference>
<dbReference type="InterPro" id="IPR027258">
    <property type="entry name" value="MAPKKK13"/>
</dbReference>
<dbReference type="InterPro" id="IPR000719">
    <property type="entry name" value="Prot_kinase_dom"/>
</dbReference>
<dbReference type="InterPro" id="IPR001245">
    <property type="entry name" value="Ser-Thr/Tyr_kinase_cat_dom"/>
</dbReference>
<dbReference type="InterPro" id="IPR008271">
    <property type="entry name" value="Ser/Thr_kinase_AS"/>
</dbReference>
<dbReference type="InterPro" id="IPR051681">
    <property type="entry name" value="Ser/Thr_Kinases-Pseudokinases"/>
</dbReference>
<dbReference type="PANTHER" id="PTHR44329:SF14">
    <property type="entry name" value="MITOGEN-ACTIVATED PROTEIN KINASE KINASE KINASE 13"/>
    <property type="match status" value="1"/>
</dbReference>
<dbReference type="PANTHER" id="PTHR44329">
    <property type="entry name" value="SERINE/THREONINE-PROTEIN KINASE TNNI3K-RELATED"/>
    <property type="match status" value="1"/>
</dbReference>
<dbReference type="Pfam" id="PF07714">
    <property type="entry name" value="PK_Tyr_Ser-Thr"/>
    <property type="match status" value="1"/>
</dbReference>
<dbReference type="PIRSF" id="PIRSF038165">
    <property type="entry name" value="MAPKKK12_MAPKKK13"/>
    <property type="match status" value="1"/>
</dbReference>
<dbReference type="PIRSF" id="PIRSF500742">
    <property type="entry name" value="MAPKKK13"/>
    <property type="match status" value="1"/>
</dbReference>
<dbReference type="PRINTS" id="PR00109">
    <property type="entry name" value="TYRKINASE"/>
</dbReference>
<dbReference type="SMART" id="SM00220">
    <property type="entry name" value="S_TKc"/>
    <property type="match status" value="1"/>
</dbReference>
<dbReference type="SUPFAM" id="SSF56112">
    <property type="entry name" value="Protein kinase-like (PK-like)"/>
    <property type="match status" value="1"/>
</dbReference>
<dbReference type="PROSITE" id="PS50011">
    <property type="entry name" value="PROTEIN_KINASE_DOM"/>
    <property type="match status" value="1"/>
</dbReference>
<dbReference type="PROSITE" id="PS00108">
    <property type="entry name" value="PROTEIN_KINASE_ST"/>
    <property type="match status" value="1"/>
</dbReference>
<gene>
    <name type="primary">Map3k13</name>
</gene>
<proteinExistence type="evidence at protein level"/>
<protein>
    <recommendedName>
        <fullName>Mitogen-activated protein kinase kinase kinase 13</fullName>
        <ecNumber>2.7.11.25</ecNumber>
    </recommendedName>
</protein>
<evidence type="ECO:0000250" key="1"/>
<evidence type="ECO:0000255" key="2">
    <source>
        <dbReference type="PROSITE-ProRule" id="PRU00159"/>
    </source>
</evidence>
<evidence type="ECO:0000255" key="3">
    <source>
        <dbReference type="PROSITE-ProRule" id="PRU10027"/>
    </source>
</evidence>
<evidence type="ECO:0000256" key="4">
    <source>
        <dbReference type="SAM" id="MobiDB-lite"/>
    </source>
</evidence>
<evidence type="ECO:0000305" key="5"/>
<keyword id="KW-0067">ATP-binding</keyword>
<keyword id="KW-0963">Cytoplasm</keyword>
<keyword id="KW-0418">Kinase</keyword>
<keyword id="KW-0460">Magnesium</keyword>
<keyword id="KW-0472">Membrane</keyword>
<keyword id="KW-0479">Metal-binding</keyword>
<keyword id="KW-0547">Nucleotide-binding</keyword>
<keyword id="KW-0597">Phosphoprotein</keyword>
<keyword id="KW-1185">Reference proteome</keyword>
<keyword id="KW-0677">Repeat</keyword>
<keyword id="KW-0723">Serine/threonine-protein kinase</keyword>
<keyword id="KW-0808">Transferase</keyword>
<reference key="1">
    <citation type="submission" date="2006-04" db="EMBL/GenBank/DDBJ databases">
        <authorList>
            <person name="Itoh A."/>
            <person name="Itoh T."/>
        </authorList>
    </citation>
    <scope>NUCLEOTIDE SEQUENCE [MRNA]</scope>
    <source>
        <strain>C57BL/6J</strain>
    </source>
</reference>
<reference key="2">
    <citation type="journal article" date="2005" name="Science">
        <title>The transcriptional landscape of the mammalian genome.</title>
        <authorList>
            <person name="Carninci P."/>
            <person name="Kasukawa T."/>
            <person name="Katayama S."/>
            <person name="Gough J."/>
            <person name="Frith M.C."/>
            <person name="Maeda N."/>
            <person name="Oyama R."/>
            <person name="Ravasi T."/>
            <person name="Lenhard B."/>
            <person name="Wells C."/>
            <person name="Kodzius R."/>
            <person name="Shimokawa K."/>
            <person name="Bajic V.B."/>
            <person name="Brenner S.E."/>
            <person name="Batalov S."/>
            <person name="Forrest A.R."/>
            <person name="Zavolan M."/>
            <person name="Davis M.J."/>
            <person name="Wilming L.G."/>
            <person name="Aidinis V."/>
            <person name="Allen J.E."/>
            <person name="Ambesi-Impiombato A."/>
            <person name="Apweiler R."/>
            <person name="Aturaliya R.N."/>
            <person name="Bailey T.L."/>
            <person name="Bansal M."/>
            <person name="Baxter L."/>
            <person name="Beisel K.W."/>
            <person name="Bersano T."/>
            <person name="Bono H."/>
            <person name="Chalk A.M."/>
            <person name="Chiu K.P."/>
            <person name="Choudhary V."/>
            <person name="Christoffels A."/>
            <person name="Clutterbuck D.R."/>
            <person name="Crowe M.L."/>
            <person name="Dalla E."/>
            <person name="Dalrymple B.P."/>
            <person name="de Bono B."/>
            <person name="Della Gatta G."/>
            <person name="di Bernardo D."/>
            <person name="Down T."/>
            <person name="Engstrom P."/>
            <person name="Fagiolini M."/>
            <person name="Faulkner G."/>
            <person name="Fletcher C.F."/>
            <person name="Fukushima T."/>
            <person name="Furuno M."/>
            <person name="Futaki S."/>
            <person name="Gariboldi M."/>
            <person name="Georgii-Hemming P."/>
            <person name="Gingeras T.R."/>
            <person name="Gojobori T."/>
            <person name="Green R.E."/>
            <person name="Gustincich S."/>
            <person name="Harbers M."/>
            <person name="Hayashi Y."/>
            <person name="Hensch T.K."/>
            <person name="Hirokawa N."/>
            <person name="Hill D."/>
            <person name="Huminiecki L."/>
            <person name="Iacono M."/>
            <person name="Ikeo K."/>
            <person name="Iwama A."/>
            <person name="Ishikawa T."/>
            <person name="Jakt M."/>
            <person name="Kanapin A."/>
            <person name="Katoh M."/>
            <person name="Kawasawa Y."/>
            <person name="Kelso J."/>
            <person name="Kitamura H."/>
            <person name="Kitano H."/>
            <person name="Kollias G."/>
            <person name="Krishnan S.P."/>
            <person name="Kruger A."/>
            <person name="Kummerfeld S.K."/>
            <person name="Kurochkin I.V."/>
            <person name="Lareau L.F."/>
            <person name="Lazarevic D."/>
            <person name="Lipovich L."/>
            <person name="Liu J."/>
            <person name="Liuni S."/>
            <person name="McWilliam S."/>
            <person name="Madan Babu M."/>
            <person name="Madera M."/>
            <person name="Marchionni L."/>
            <person name="Matsuda H."/>
            <person name="Matsuzawa S."/>
            <person name="Miki H."/>
            <person name="Mignone F."/>
            <person name="Miyake S."/>
            <person name="Morris K."/>
            <person name="Mottagui-Tabar S."/>
            <person name="Mulder N."/>
            <person name="Nakano N."/>
            <person name="Nakauchi H."/>
            <person name="Ng P."/>
            <person name="Nilsson R."/>
            <person name="Nishiguchi S."/>
            <person name="Nishikawa S."/>
            <person name="Nori F."/>
            <person name="Ohara O."/>
            <person name="Okazaki Y."/>
            <person name="Orlando V."/>
            <person name="Pang K.C."/>
            <person name="Pavan W.J."/>
            <person name="Pavesi G."/>
            <person name="Pesole G."/>
            <person name="Petrovsky N."/>
            <person name="Piazza S."/>
            <person name="Reed J."/>
            <person name="Reid J.F."/>
            <person name="Ring B.Z."/>
            <person name="Ringwald M."/>
            <person name="Rost B."/>
            <person name="Ruan Y."/>
            <person name="Salzberg S.L."/>
            <person name="Sandelin A."/>
            <person name="Schneider C."/>
            <person name="Schoenbach C."/>
            <person name="Sekiguchi K."/>
            <person name="Semple C.A."/>
            <person name="Seno S."/>
            <person name="Sessa L."/>
            <person name="Sheng Y."/>
            <person name="Shibata Y."/>
            <person name="Shimada H."/>
            <person name="Shimada K."/>
            <person name="Silva D."/>
            <person name="Sinclair B."/>
            <person name="Sperling S."/>
            <person name="Stupka E."/>
            <person name="Sugiura K."/>
            <person name="Sultana R."/>
            <person name="Takenaka Y."/>
            <person name="Taki K."/>
            <person name="Tammoja K."/>
            <person name="Tan S.L."/>
            <person name="Tang S."/>
            <person name="Taylor M.S."/>
            <person name="Tegner J."/>
            <person name="Teichmann S.A."/>
            <person name="Ueda H.R."/>
            <person name="van Nimwegen E."/>
            <person name="Verardo R."/>
            <person name="Wei C.L."/>
            <person name="Yagi K."/>
            <person name="Yamanishi H."/>
            <person name="Zabarovsky E."/>
            <person name="Zhu S."/>
            <person name="Zimmer A."/>
            <person name="Hide W."/>
            <person name="Bult C."/>
            <person name="Grimmond S.M."/>
            <person name="Teasdale R.D."/>
            <person name="Liu E.T."/>
            <person name="Brusic V."/>
            <person name="Quackenbush J."/>
            <person name="Wahlestedt C."/>
            <person name="Mattick J.S."/>
            <person name="Hume D.A."/>
            <person name="Kai C."/>
            <person name="Sasaki D."/>
            <person name="Tomaru Y."/>
            <person name="Fukuda S."/>
            <person name="Kanamori-Katayama M."/>
            <person name="Suzuki M."/>
            <person name="Aoki J."/>
            <person name="Arakawa T."/>
            <person name="Iida J."/>
            <person name="Imamura K."/>
            <person name="Itoh M."/>
            <person name="Kato T."/>
            <person name="Kawaji H."/>
            <person name="Kawagashira N."/>
            <person name="Kawashima T."/>
            <person name="Kojima M."/>
            <person name="Kondo S."/>
            <person name="Konno H."/>
            <person name="Nakano K."/>
            <person name="Ninomiya N."/>
            <person name="Nishio T."/>
            <person name="Okada M."/>
            <person name="Plessy C."/>
            <person name="Shibata K."/>
            <person name="Shiraki T."/>
            <person name="Suzuki S."/>
            <person name="Tagami M."/>
            <person name="Waki K."/>
            <person name="Watahiki A."/>
            <person name="Okamura-Oho Y."/>
            <person name="Suzuki H."/>
            <person name="Kawai J."/>
            <person name="Hayashizaki Y."/>
        </authorList>
    </citation>
    <scope>NUCLEOTIDE SEQUENCE [LARGE SCALE MRNA] OF 690-959</scope>
    <source>
        <strain>C57BL/6J</strain>
        <tissue>Spinal ganglion</tissue>
    </source>
</reference>
<reference key="3">
    <citation type="journal article" date="2010" name="Cell">
        <title>A tissue-specific atlas of mouse protein phosphorylation and expression.</title>
        <authorList>
            <person name="Huttlin E.L."/>
            <person name="Jedrychowski M.P."/>
            <person name="Elias J.E."/>
            <person name="Goswami T."/>
            <person name="Rad R."/>
            <person name="Beausoleil S.A."/>
            <person name="Villen J."/>
            <person name="Haas W."/>
            <person name="Sowa M.E."/>
            <person name="Gygi S.P."/>
        </authorList>
    </citation>
    <scope>IDENTIFICATION BY MASS SPECTROMETRY [LARGE SCALE ANALYSIS]</scope>
    <source>
        <tissue>Brain</tissue>
        <tissue>Kidney</tissue>
    </source>
</reference>
<organism>
    <name type="scientific">Mus musculus</name>
    <name type="common">Mouse</name>
    <dbReference type="NCBI Taxonomy" id="10090"/>
    <lineage>
        <taxon>Eukaryota</taxon>
        <taxon>Metazoa</taxon>
        <taxon>Chordata</taxon>
        <taxon>Craniata</taxon>
        <taxon>Vertebrata</taxon>
        <taxon>Euteleostomi</taxon>
        <taxon>Mammalia</taxon>
        <taxon>Eutheria</taxon>
        <taxon>Euarchontoglires</taxon>
        <taxon>Glires</taxon>
        <taxon>Rodentia</taxon>
        <taxon>Myomorpha</taxon>
        <taxon>Muroidea</taxon>
        <taxon>Muridae</taxon>
        <taxon>Murinae</taxon>
        <taxon>Mus</taxon>
        <taxon>Mus</taxon>
    </lineage>
</organism>
<feature type="chain" id="PRO_0000277591" description="Mitogen-activated protein kinase kinase kinase 13">
    <location>
        <begin position="1"/>
        <end position="959"/>
    </location>
</feature>
<feature type="domain" description="Protein kinase" evidence="2">
    <location>
        <begin position="167"/>
        <end position="408"/>
    </location>
</feature>
<feature type="region of interest" description="Disordered" evidence="4">
    <location>
        <begin position="1"/>
        <end position="47"/>
    </location>
</feature>
<feature type="region of interest" description="Leucine-zipper 1">
    <location>
        <begin position="432"/>
        <end position="453"/>
    </location>
</feature>
<feature type="region of interest" description="Leucine-zipper 2">
    <location>
        <begin position="485"/>
        <end position="506"/>
    </location>
</feature>
<feature type="region of interest" description="Disordered" evidence="4">
    <location>
        <begin position="533"/>
        <end position="599"/>
    </location>
</feature>
<feature type="region of interest" description="Disordered" evidence="4">
    <location>
        <begin position="739"/>
        <end position="828"/>
    </location>
</feature>
<feature type="region of interest" description="Disordered" evidence="4">
    <location>
        <begin position="842"/>
        <end position="902"/>
    </location>
</feature>
<feature type="region of interest" description="Disordered" evidence="4">
    <location>
        <begin position="927"/>
        <end position="959"/>
    </location>
</feature>
<feature type="compositionally biased region" description="Low complexity" evidence="4">
    <location>
        <begin position="7"/>
        <end position="18"/>
    </location>
</feature>
<feature type="compositionally biased region" description="Polar residues" evidence="4">
    <location>
        <begin position="566"/>
        <end position="577"/>
    </location>
</feature>
<feature type="compositionally biased region" description="Basic residues" evidence="4">
    <location>
        <begin position="581"/>
        <end position="593"/>
    </location>
</feature>
<feature type="compositionally biased region" description="Polar residues" evidence="4">
    <location>
        <begin position="754"/>
        <end position="774"/>
    </location>
</feature>
<feature type="compositionally biased region" description="Polar residues" evidence="4">
    <location>
        <begin position="780"/>
        <end position="790"/>
    </location>
</feature>
<feature type="compositionally biased region" description="Acidic residues" evidence="4">
    <location>
        <begin position="808"/>
        <end position="820"/>
    </location>
</feature>
<feature type="compositionally biased region" description="Basic and acidic residues" evidence="4">
    <location>
        <begin position="866"/>
        <end position="876"/>
    </location>
</feature>
<feature type="compositionally biased region" description="Acidic residues" evidence="4">
    <location>
        <begin position="934"/>
        <end position="943"/>
    </location>
</feature>
<feature type="compositionally biased region" description="Polar residues" evidence="4">
    <location>
        <begin position="947"/>
        <end position="959"/>
    </location>
</feature>
<feature type="active site" description="Proton acceptor" evidence="2 3">
    <location>
        <position position="278"/>
    </location>
</feature>
<feature type="binding site" evidence="2">
    <location>
        <begin position="173"/>
        <end position="181"/>
    </location>
    <ligand>
        <name>ATP</name>
        <dbReference type="ChEBI" id="CHEBI:30616"/>
    </ligand>
</feature>
<feature type="binding site" evidence="2">
    <location>
        <position position="194"/>
    </location>
    <ligand>
        <name>ATP</name>
        <dbReference type="ChEBI" id="CHEBI:30616"/>
    </ligand>
</feature>
<sequence length="959" mass="106987">MANPQEHLSCSSLPHLPLTENKTSGGRNELAAMGNHPSPKLPEDPQERGAIQSELMEITGSPISTTVLTSVSEDSRGQFENSVLQLREQDESEMTLSLGNSNTVDGENTNGPEDIKIQFSRSGSGSGGFLEGLFGCLRPVWNIIGKAYSTDYKLQQQDTWEVPFEEISELQWLGSGAQGAVFLGKFRAEEVAIKKVREQNETDIKHLRKLKHPNIIAFKGVCTQAPCYCIIMEYCAHGQLYEVLRAGRKITPRLLVDWSTGIASGMNYLHLHKIIHRDLKSPNVLVTHTDAVKISDFGTSKELSDKSTKMSFAGTVAWMAPEVIRNEPVSEKVDIWSFGVVLWELLTGEIPYKDVDSSAIIWGVGSNSLHLPVPSTCPDGFKILMKQTWQSKPRNRPSFRQTLMHLDIASADVLATPQETYFKSQAEWREEVKKHFEKIKSEGTCIHRLDEELIRRRREELRHALDIREHYERKLERANNLYMELSAIMLQLEMREKELLKREQAVEKKYPGTYKRHPVRPIIHPNAMEKLMKRKGVPHKAGVQTKRPDLLRSEGIPSTEAVPTASPLSGSPKMSTASSRSRYRSKPRHRRGNSRGSHSDFAAILKTQPAQENSPHPTYMHHTQAQCASVHQHNPLQQQYQQIPPAQPQSRHPRLNAHGQDIATCANNLRYFGPAAALRSPLSNHAQRQMPGSSPDLISTAMAADWRNSELDQDQVGPWGCCQAEPYDPCFQCRPEHSGSLDVPTTEPVGRSPDLSSSPAHNPLSGNAQGSERTGANGFSGCQSGISHQFTPPMLPQKTRPLQKSGDDSSEEEGEVDSEVEFPRRQRPHRCISSYQSYSTFSSENFSVSDGEEGNTSDHSNSPDESANRRQDRLAETLDDLLSQTPEAPIEISSHSDGLSDKECAVRRVKTQMSLGKLCAEERGYENPVQFGDSDCDSSEGECSDATVRTSKNYSSATW</sequence>
<accession>Q1HKZ5</accession>
<accession>Q8BKN0</accession>
<comment type="function">
    <text evidence="1">Activates the JUN N-terminal pathway through activation of the MAP kinase kinase MAP2K7. Acts synergistically with PRDX3 to regulate the activation of NF-kappa-B in the cytosol. This activation is kinase-dependent and involves activating the IKK complex, the IKBKB-containing complex that phosphorylates inhibitors of NF-kappa-B (By similarity).</text>
</comment>
<comment type="catalytic activity">
    <reaction>
        <text>L-seryl-[protein] + ATP = O-phospho-L-seryl-[protein] + ADP + H(+)</text>
        <dbReference type="Rhea" id="RHEA:17989"/>
        <dbReference type="Rhea" id="RHEA-COMP:9863"/>
        <dbReference type="Rhea" id="RHEA-COMP:11604"/>
        <dbReference type="ChEBI" id="CHEBI:15378"/>
        <dbReference type="ChEBI" id="CHEBI:29999"/>
        <dbReference type="ChEBI" id="CHEBI:30616"/>
        <dbReference type="ChEBI" id="CHEBI:83421"/>
        <dbReference type="ChEBI" id="CHEBI:456216"/>
        <dbReference type="EC" id="2.7.11.25"/>
    </reaction>
</comment>
<comment type="catalytic activity">
    <reaction>
        <text>L-threonyl-[protein] + ATP = O-phospho-L-threonyl-[protein] + ADP + H(+)</text>
        <dbReference type="Rhea" id="RHEA:46608"/>
        <dbReference type="Rhea" id="RHEA-COMP:11060"/>
        <dbReference type="Rhea" id="RHEA-COMP:11605"/>
        <dbReference type="ChEBI" id="CHEBI:15378"/>
        <dbReference type="ChEBI" id="CHEBI:30013"/>
        <dbReference type="ChEBI" id="CHEBI:30616"/>
        <dbReference type="ChEBI" id="CHEBI:61977"/>
        <dbReference type="ChEBI" id="CHEBI:456216"/>
        <dbReference type="EC" id="2.7.11.25"/>
    </reaction>
</comment>
<comment type="cofactor">
    <cofactor evidence="1">
        <name>Mg(2+)</name>
        <dbReference type="ChEBI" id="CHEBI:18420"/>
    </cofactor>
</comment>
<comment type="activity regulation">
    <text evidence="1">Activated by autophosphorylation and homodimerization.</text>
</comment>
<comment type="subunit">
    <text>Homodimer; forms dimers through the leucine-zipper motif. Interacts with the C-terminus of MAPK8IP1 through the kinase catalytic domain. Binds PRDX3. Associates with the IKK complex through the kinase domain.</text>
</comment>
<comment type="subcellular location">
    <subcellularLocation>
        <location>Cytoplasm</location>
    </subcellularLocation>
    <subcellularLocation>
        <location evidence="1">Membrane</location>
        <topology evidence="1">Peripheral membrane protein</topology>
    </subcellularLocation>
</comment>
<comment type="PTM">
    <text evidence="1">Autophosphorylated on serine and threonine residues.</text>
</comment>
<comment type="similarity">
    <text evidence="5">Belongs to the protein kinase superfamily. STE Ser/Thr protein kinase family. MAP kinase kinase kinase subfamily.</text>
</comment>